<feature type="chain" id="PRO_0000187848" description="Peptidyl-tRNA hydrolase">
    <location>
        <begin position="1"/>
        <end position="186"/>
    </location>
</feature>
<feature type="active site" description="Proton acceptor" evidence="1">
    <location>
        <position position="21"/>
    </location>
</feature>
<feature type="binding site" evidence="1">
    <location>
        <position position="16"/>
    </location>
    <ligand>
        <name>tRNA</name>
        <dbReference type="ChEBI" id="CHEBI:17843"/>
    </ligand>
</feature>
<feature type="binding site" evidence="1">
    <location>
        <position position="60"/>
    </location>
    <ligand>
        <name>tRNA</name>
        <dbReference type="ChEBI" id="CHEBI:17843"/>
    </ligand>
</feature>
<feature type="binding site" evidence="1">
    <location>
        <position position="62"/>
    </location>
    <ligand>
        <name>tRNA</name>
        <dbReference type="ChEBI" id="CHEBI:17843"/>
    </ligand>
</feature>
<feature type="site" description="Discriminates between blocked and unblocked aminoacyl-tRNA" evidence="1">
    <location>
        <position position="11"/>
    </location>
</feature>
<feature type="site" description="Stabilizes the basic form of H active site to accept a proton" evidence="1">
    <location>
        <position position="85"/>
    </location>
</feature>
<dbReference type="EC" id="3.1.1.29" evidence="1"/>
<dbReference type="EMBL" id="AE014184">
    <property type="protein sequence ID" value="AAO44748.1"/>
    <property type="molecule type" value="Genomic_DNA"/>
</dbReference>
<dbReference type="SMR" id="Q83FR1"/>
<dbReference type="STRING" id="203267.TWT_651"/>
<dbReference type="KEGG" id="twh:TWT_651"/>
<dbReference type="eggNOG" id="COG0193">
    <property type="taxonomic scope" value="Bacteria"/>
</dbReference>
<dbReference type="HOGENOM" id="CLU_062456_4_1_11"/>
<dbReference type="OrthoDB" id="9800507at2"/>
<dbReference type="Proteomes" id="UP000002200">
    <property type="component" value="Chromosome"/>
</dbReference>
<dbReference type="GO" id="GO:0005737">
    <property type="term" value="C:cytoplasm"/>
    <property type="evidence" value="ECO:0007669"/>
    <property type="project" value="UniProtKB-SubCell"/>
</dbReference>
<dbReference type="GO" id="GO:0004045">
    <property type="term" value="F:peptidyl-tRNA hydrolase activity"/>
    <property type="evidence" value="ECO:0007669"/>
    <property type="project" value="UniProtKB-UniRule"/>
</dbReference>
<dbReference type="GO" id="GO:0000049">
    <property type="term" value="F:tRNA binding"/>
    <property type="evidence" value="ECO:0007669"/>
    <property type="project" value="UniProtKB-UniRule"/>
</dbReference>
<dbReference type="GO" id="GO:0006515">
    <property type="term" value="P:protein quality control for misfolded or incompletely synthesized proteins"/>
    <property type="evidence" value="ECO:0007669"/>
    <property type="project" value="UniProtKB-UniRule"/>
</dbReference>
<dbReference type="GO" id="GO:0072344">
    <property type="term" value="P:rescue of stalled ribosome"/>
    <property type="evidence" value="ECO:0007669"/>
    <property type="project" value="UniProtKB-UniRule"/>
</dbReference>
<dbReference type="CDD" id="cd00462">
    <property type="entry name" value="PTH"/>
    <property type="match status" value="1"/>
</dbReference>
<dbReference type="Gene3D" id="3.40.50.1470">
    <property type="entry name" value="Peptidyl-tRNA hydrolase"/>
    <property type="match status" value="1"/>
</dbReference>
<dbReference type="HAMAP" id="MF_00083">
    <property type="entry name" value="Pept_tRNA_hydro_bact"/>
    <property type="match status" value="1"/>
</dbReference>
<dbReference type="InterPro" id="IPR001328">
    <property type="entry name" value="Pept_tRNA_hydro"/>
</dbReference>
<dbReference type="InterPro" id="IPR018171">
    <property type="entry name" value="Pept_tRNA_hydro_CS"/>
</dbReference>
<dbReference type="InterPro" id="IPR036416">
    <property type="entry name" value="Pept_tRNA_hydro_sf"/>
</dbReference>
<dbReference type="NCBIfam" id="TIGR00447">
    <property type="entry name" value="pth"/>
    <property type="match status" value="1"/>
</dbReference>
<dbReference type="PANTHER" id="PTHR17224">
    <property type="entry name" value="PEPTIDYL-TRNA HYDROLASE"/>
    <property type="match status" value="1"/>
</dbReference>
<dbReference type="PANTHER" id="PTHR17224:SF1">
    <property type="entry name" value="PEPTIDYL-TRNA HYDROLASE"/>
    <property type="match status" value="1"/>
</dbReference>
<dbReference type="Pfam" id="PF01195">
    <property type="entry name" value="Pept_tRNA_hydro"/>
    <property type="match status" value="1"/>
</dbReference>
<dbReference type="SUPFAM" id="SSF53178">
    <property type="entry name" value="Peptidyl-tRNA hydrolase-like"/>
    <property type="match status" value="1"/>
</dbReference>
<dbReference type="PROSITE" id="PS01195">
    <property type="entry name" value="PEPT_TRNA_HYDROL_1"/>
    <property type="match status" value="1"/>
</dbReference>
<organism>
    <name type="scientific">Tropheryma whipplei (strain Twist)</name>
    <name type="common">Whipple's bacillus</name>
    <dbReference type="NCBI Taxonomy" id="203267"/>
    <lineage>
        <taxon>Bacteria</taxon>
        <taxon>Bacillati</taxon>
        <taxon>Actinomycetota</taxon>
        <taxon>Actinomycetes</taxon>
        <taxon>Micrococcales</taxon>
        <taxon>Tropherymataceae</taxon>
        <taxon>Tropheryma</taxon>
    </lineage>
</organism>
<proteinExistence type="inferred from homology"/>
<comment type="function">
    <text evidence="1">Hydrolyzes ribosome-free peptidyl-tRNAs (with 1 or more amino acids incorporated), which drop off the ribosome during protein synthesis, or as a result of ribosome stalling.</text>
</comment>
<comment type="function">
    <text evidence="1">Catalyzes the release of premature peptidyl moieties from peptidyl-tRNA molecules trapped in stalled 50S ribosomal subunits, and thus maintains levels of free tRNAs and 50S ribosomes.</text>
</comment>
<comment type="catalytic activity">
    <reaction evidence="1">
        <text>an N-acyl-L-alpha-aminoacyl-tRNA + H2O = an N-acyl-L-amino acid + a tRNA + H(+)</text>
        <dbReference type="Rhea" id="RHEA:54448"/>
        <dbReference type="Rhea" id="RHEA-COMP:10123"/>
        <dbReference type="Rhea" id="RHEA-COMP:13883"/>
        <dbReference type="ChEBI" id="CHEBI:15377"/>
        <dbReference type="ChEBI" id="CHEBI:15378"/>
        <dbReference type="ChEBI" id="CHEBI:59874"/>
        <dbReference type="ChEBI" id="CHEBI:78442"/>
        <dbReference type="ChEBI" id="CHEBI:138191"/>
        <dbReference type="EC" id="3.1.1.29"/>
    </reaction>
</comment>
<comment type="subunit">
    <text evidence="1">Monomer.</text>
</comment>
<comment type="subcellular location">
    <subcellularLocation>
        <location evidence="1">Cytoplasm</location>
    </subcellularLocation>
</comment>
<comment type="similarity">
    <text evidence="1">Belongs to the PTH family.</text>
</comment>
<evidence type="ECO:0000255" key="1">
    <source>
        <dbReference type="HAMAP-Rule" id="MF_00083"/>
    </source>
</evidence>
<sequence length="186" mass="20335">MCVYIVAGLGNPGPSYDKTRHNVGQMVLDILSGGARFRRHKTNNFYLSLGDILLVKPDAYMNLSGPVIASLMKFHSVSDLLVLHDDIDLPLGTLRFKQGGGTAGHRGLRSISDCLGSDYARLRVGIGRPENNQSIEDFVLSNFSPVQTDIISRTIQLAAEAVLHLRDNGFVGVKQFIAQTKLPSRT</sequence>
<accession>Q83FR1</accession>
<gene>
    <name evidence="1" type="primary">pth</name>
    <name type="ordered locus">TWT_651</name>
</gene>
<protein>
    <recommendedName>
        <fullName evidence="1">Peptidyl-tRNA hydrolase</fullName>
        <shortName evidence="1">Pth</shortName>
        <ecNumber evidence="1">3.1.1.29</ecNumber>
    </recommendedName>
</protein>
<keyword id="KW-0963">Cytoplasm</keyword>
<keyword id="KW-0378">Hydrolase</keyword>
<keyword id="KW-1185">Reference proteome</keyword>
<keyword id="KW-0694">RNA-binding</keyword>
<keyword id="KW-0820">tRNA-binding</keyword>
<name>PTH_TROWT</name>
<reference key="1">
    <citation type="journal article" date="2003" name="Genome Res.">
        <title>Tropheryma whipplei twist: a human pathogenic Actinobacteria with a reduced genome.</title>
        <authorList>
            <person name="Raoult D."/>
            <person name="Ogata H."/>
            <person name="Audic S."/>
            <person name="Robert C."/>
            <person name="Suhre K."/>
            <person name="Drancourt M."/>
            <person name="Claverie J.-M."/>
        </authorList>
    </citation>
    <scope>NUCLEOTIDE SEQUENCE [LARGE SCALE GENOMIC DNA]</scope>
    <source>
        <strain>Twist</strain>
    </source>
</reference>